<organism>
    <name type="scientific">Arabidopsis thaliana</name>
    <name type="common">Mouse-ear cress</name>
    <dbReference type="NCBI Taxonomy" id="3702"/>
    <lineage>
        <taxon>Eukaryota</taxon>
        <taxon>Viridiplantae</taxon>
        <taxon>Streptophyta</taxon>
        <taxon>Embryophyta</taxon>
        <taxon>Tracheophyta</taxon>
        <taxon>Spermatophyta</taxon>
        <taxon>Magnoliopsida</taxon>
        <taxon>eudicotyledons</taxon>
        <taxon>Gunneridae</taxon>
        <taxon>Pentapetalae</taxon>
        <taxon>rosids</taxon>
        <taxon>malvids</taxon>
        <taxon>Brassicales</taxon>
        <taxon>Brassicaceae</taxon>
        <taxon>Camelineae</taxon>
        <taxon>Arabidopsis</taxon>
    </lineage>
</organism>
<comment type="function">
    <text>Glutamate-gated receptor that probably acts as a non-selective cation channel. May be involved in light-signal transduction and calcium homeostasis via the regulation of calcium influx into cells.</text>
</comment>
<comment type="subunit">
    <text evidence="1">May form heteromers.</text>
</comment>
<comment type="subcellular location">
    <subcellularLocation>
        <location>Membrane</location>
        <topology>Multi-pass membrane protein</topology>
    </subcellularLocation>
</comment>
<comment type="tissue specificity">
    <text evidence="4">Expressed predominantly in roots.</text>
</comment>
<comment type="similarity">
    <text evidence="5">Belongs to the glutamate-gated ion channel (TC 1.A.10.1) family.</text>
</comment>
<evidence type="ECO:0000250" key="1"/>
<evidence type="ECO:0000255" key="2"/>
<evidence type="ECO:0000256" key="3">
    <source>
        <dbReference type="SAM" id="MobiDB-lite"/>
    </source>
</evidence>
<evidence type="ECO:0000269" key="4">
    <source>
    </source>
</evidence>
<evidence type="ECO:0000305" key="5"/>
<reference key="1">
    <citation type="journal article" date="1999" name="Nature">
        <title>Sequence and analysis of chromosome 2 of the plant Arabidopsis thaliana.</title>
        <authorList>
            <person name="Lin X."/>
            <person name="Kaul S."/>
            <person name="Rounsley S.D."/>
            <person name="Shea T.P."/>
            <person name="Benito M.-I."/>
            <person name="Town C.D."/>
            <person name="Fujii C.Y."/>
            <person name="Mason T.M."/>
            <person name="Bowman C.L."/>
            <person name="Barnstead M.E."/>
            <person name="Feldblyum T.V."/>
            <person name="Buell C.R."/>
            <person name="Ketchum K.A."/>
            <person name="Lee J.J."/>
            <person name="Ronning C.M."/>
            <person name="Koo H.L."/>
            <person name="Moffat K.S."/>
            <person name="Cronin L.A."/>
            <person name="Shen M."/>
            <person name="Pai G."/>
            <person name="Van Aken S."/>
            <person name="Umayam L."/>
            <person name="Tallon L.J."/>
            <person name="Gill J.E."/>
            <person name="Adams M.D."/>
            <person name="Carrera A.J."/>
            <person name="Creasy T.H."/>
            <person name="Goodman H.M."/>
            <person name="Somerville C.R."/>
            <person name="Copenhaver G.P."/>
            <person name="Preuss D."/>
            <person name="Nierman W.C."/>
            <person name="White O."/>
            <person name="Eisen J.A."/>
            <person name="Salzberg S.L."/>
            <person name="Fraser C.M."/>
            <person name="Venter J.C."/>
        </authorList>
    </citation>
    <scope>NUCLEOTIDE SEQUENCE [LARGE SCALE GENOMIC DNA]</scope>
    <source>
        <strain>cv. Columbia</strain>
    </source>
</reference>
<reference key="2">
    <citation type="journal article" date="2017" name="Plant J.">
        <title>Araport11: a complete reannotation of the Arabidopsis thaliana reference genome.</title>
        <authorList>
            <person name="Cheng C.Y."/>
            <person name="Krishnakumar V."/>
            <person name="Chan A.P."/>
            <person name="Thibaud-Nissen F."/>
            <person name="Schobel S."/>
            <person name="Town C.D."/>
        </authorList>
    </citation>
    <scope>GENOME REANNOTATION</scope>
    <source>
        <strain>cv. Columbia</strain>
    </source>
</reference>
<reference key="3">
    <citation type="journal article" date="2001" name="Science">
        <title>The identity of plant glutamate receptors.</title>
        <authorList>
            <person name="Lacombe B."/>
            <person name="Becker D."/>
            <person name="Hedrich R."/>
            <person name="DeSalle R."/>
            <person name="Hollmann M."/>
            <person name="Kwak J.M."/>
            <person name="Schroeder J.I."/>
            <person name="Le Novere N."/>
            <person name="Nam H.G."/>
            <person name="Spalding E.P."/>
            <person name="Tester M."/>
            <person name="Turano F.J."/>
            <person name="Chiu J."/>
            <person name="Coruzzi G."/>
        </authorList>
    </citation>
    <scope>GENE FAMILY</scope>
    <scope>NOMENCLATURE</scope>
</reference>
<reference key="4">
    <citation type="journal article" date="2002" name="Mol. Biol. Evol.">
        <title>Phylogenetic and expression analysis of the glutamate-receptor-like gene family in Arabidopsis thaliana.</title>
        <authorList>
            <person name="Chiu J.C."/>
            <person name="Brenner E.D."/>
            <person name="DeSalle R."/>
            <person name="Nitabach M.N."/>
            <person name="Holmes T.C."/>
            <person name="Coruzzi G.M."/>
        </authorList>
    </citation>
    <scope>TISSUE SPECIFICITY</scope>
</reference>
<sequence>MRTEKLFFCILLVFFFCLEFNRGQNNGKTLVDVGVVTDVDTSHSKVVMLCINMSISDFYSSNPQFETRLVVNVGDSKSDVVGAAIAALDLIKNKQVKAILGPWTSMQAHFLIEIGQKSRVPIVSYSATSPILTSLRSPYFLRATYEDSFQVQPIKAIIKLFGWREVVPVYIDNTFGEGIMPRLTDALQDINVRIPYRSVIAINATDHEISVELLKMMNMPTRVFLVHMYYDLASRFFIKAKELGLMEPGYVWILTNGVIDDLSLINETAVEAMEGVLGIKTYIPKSPDLEKFRSRWRSLFPRVELSVYGLWAYDATTALAVAIEEAGTNNMTFSKVVDTGRNVSELEALGLSQFGPKLLQTLLTVQFRGLAGEFRFFRGQLQPSVFEIVNIINTGEKSIGFWKEGNGLVKKLDQQASSISALSTWKDHLKHIVWPGEADSVPKGWQIPTKGKKLRIGVPKRTGYTDLVKVTRDPITNSTVVTGFCIDFFEAVIRELPYDVSYEFIPFEKPDGKTAGNYNDLVYQVYLGRYDAVVGDTTILVNRSSYVDFTFPFIKSGVGLIVEMTDPVKRDYILFMKPLSWKLWLTSFISFFLVGCTVWVLEYKRNPDFSGPPRFQASTICWFAFSTMVFAPRERVFSFWARALVIAWYFLVLVLTQSYTASLASLLTSQKLNPTITSMSSLLEKGETVGYQRTSFILGKLKERGFPQSSLVPFDTAEECDELLSKGPKKGGVSGAFLEIPYLRLFLGQFCNTYKMVEEPFNVDGFGFVFPIGSPLVADVSRAILKVAESPKAMELERAWFKKKEQSCPDPITNPDPNPSFTSRQLDIDSFLFLFVGVLLVCVMALGNFTYCFLAKDQVSYLDKVEMSPCSSSQQMPVKRKTQLNMSQVHDQDSL</sequence>
<gene>
    <name type="primary">GLR2.3</name>
    <name type="ordered locus">At2g24710</name>
    <name type="ORF">F27A10.2</name>
</gene>
<accession>Q9SHV2</accession>
<dbReference type="EMBL" id="AC007266">
    <property type="protein sequence ID" value="AAD26894.1"/>
    <property type="molecule type" value="Genomic_DNA"/>
</dbReference>
<dbReference type="EMBL" id="CP002685">
    <property type="protein sequence ID" value="AEC07621.1"/>
    <property type="molecule type" value="Genomic_DNA"/>
</dbReference>
<dbReference type="PIR" id="A84640">
    <property type="entry name" value="A84640"/>
</dbReference>
<dbReference type="RefSeq" id="NP_180047.1">
    <property type="nucleotide sequence ID" value="NM_128032.1"/>
</dbReference>
<dbReference type="SMR" id="Q9SHV2"/>
<dbReference type="FunCoup" id="Q9SHV2">
    <property type="interactions" value="147"/>
</dbReference>
<dbReference type="STRING" id="3702.Q9SHV2"/>
<dbReference type="GlyCosmos" id="Q9SHV2">
    <property type="glycosylation" value="7 sites, No reported glycans"/>
</dbReference>
<dbReference type="GlyGen" id="Q9SHV2">
    <property type="glycosylation" value="7 sites"/>
</dbReference>
<dbReference type="PaxDb" id="3702-AT2G24710.1"/>
<dbReference type="ProteomicsDB" id="247400"/>
<dbReference type="EnsemblPlants" id="AT2G24710.1">
    <property type="protein sequence ID" value="AT2G24710.1"/>
    <property type="gene ID" value="AT2G24710"/>
</dbReference>
<dbReference type="GeneID" id="817007"/>
<dbReference type="Gramene" id="AT2G24710.1">
    <property type="protein sequence ID" value="AT2G24710.1"/>
    <property type="gene ID" value="AT2G24710"/>
</dbReference>
<dbReference type="KEGG" id="ath:AT2G24710"/>
<dbReference type="Araport" id="AT2G24710"/>
<dbReference type="TAIR" id="AT2G24710">
    <property type="gene designation" value="GLR2.3"/>
</dbReference>
<dbReference type="eggNOG" id="KOG1052">
    <property type="taxonomic scope" value="Eukaryota"/>
</dbReference>
<dbReference type="HOGENOM" id="CLU_007358_0_2_1"/>
<dbReference type="InParanoid" id="Q9SHV2"/>
<dbReference type="PhylomeDB" id="Q9SHV2"/>
<dbReference type="PRO" id="PR:Q9SHV2"/>
<dbReference type="Proteomes" id="UP000006548">
    <property type="component" value="Chromosome 2"/>
</dbReference>
<dbReference type="ExpressionAtlas" id="Q9SHV2">
    <property type="expression patterns" value="baseline and differential"/>
</dbReference>
<dbReference type="GO" id="GO:0005886">
    <property type="term" value="C:plasma membrane"/>
    <property type="evidence" value="ECO:0000250"/>
    <property type="project" value="UniProtKB"/>
</dbReference>
<dbReference type="GO" id="GO:0005262">
    <property type="term" value="F:calcium channel activity"/>
    <property type="evidence" value="ECO:0000250"/>
    <property type="project" value="UniProtKB"/>
</dbReference>
<dbReference type="GO" id="GO:0008066">
    <property type="term" value="F:glutamate receptor activity"/>
    <property type="evidence" value="ECO:0000250"/>
    <property type="project" value="UniProtKB"/>
</dbReference>
<dbReference type="GO" id="GO:0015276">
    <property type="term" value="F:ligand-gated monoatomic ion channel activity"/>
    <property type="evidence" value="ECO:0007669"/>
    <property type="project" value="InterPro"/>
</dbReference>
<dbReference type="GO" id="GO:0006816">
    <property type="term" value="P:calcium ion transport"/>
    <property type="evidence" value="ECO:0000250"/>
    <property type="project" value="UniProtKB"/>
</dbReference>
<dbReference type="GO" id="GO:0019722">
    <property type="term" value="P:calcium-mediated signaling"/>
    <property type="evidence" value="ECO:0000250"/>
    <property type="project" value="UniProtKB"/>
</dbReference>
<dbReference type="GO" id="GO:0071230">
    <property type="term" value="P:cellular response to amino acid stimulus"/>
    <property type="evidence" value="ECO:0000250"/>
    <property type="project" value="UniProtKB"/>
</dbReference>
<dbReference type="CDD" id="cd13686">
    <property type="entry name" value="GluR_Plant"/>
    <property type="match status" value="1"/>
</dbReference>
<dbReference type="CDD" id="cd19990">
    <property type="entry name" value="PBP1_GABAb_receptor_plant"/>
    <property type="match status" value="1"/>
</dbReference>
<dbReference type="FunFam" id="1.10.287.70:FF:000037">
    <property type="entry name" value="Glutamate receptor"/>
    <property type="match status" value="1"/>
</dbReference>
<dbReference type="FunFam" id="3.40.190.10:FF:000103">
    <property type="entry name" value="Glutamate receptor"/>
    <property type="match status" value="1"/>
</dbReference>
<dbReference type="FunFam" id="3.40.50.2300:FF:000081">
    <property type="entry name" value="Glutamate receptor"/>
    <property type="match status" value="1"/>
</dbReference>
<dbReference type="FunFam" id="3.40.50.2300:FF:000310">
    <property type="entry name" value="Glutamate receptor"/>
    <property type="match status" value="1"/>
</dbReference>
<dbReference type="FunFam" id="3.40.50.2300:FF:000398">
    <property type="entry name" value="Glutamate receptor"/>
    <property type="match status" value="1"/>
</dbReference>
<dbReference type="FunFam" id="3.40.190.10:FF:000276">
    <property type="entry name" value="Glutamate receptor 2.3"/>
    <property type="match status" value="1"/>
</dbReference>
<dbReference type="Gene3D" id="1.10.287.70">
    <property type="match status" value="1"/>
</dbReference>
<dbReference type="Gene3D" id="3.40.50.2300">
    <property type="match status" value="3"/>
</dbReference>
<dbReference type="Gene3D" id="3.40.190.10">
    <property type="entry name" value="Periplasmic binding protein-like II"/>
    <property type="match status" value="2"/>
</dbReference>
<dbReference type="InterPro" id="IPR001828">
    <property type="entry name" value="ANF_lig-bd_rcpt"/>
</dbReference>
<dbReference type="InterPro" id="IPR044440">
    <property type="entry name" value="GABAb_receptor_plant_PBP1"/>
</dbReference>
<dbReference type="InterPro" id="IPR019594">
    <property type="entry name" value="Glu/Gly-bd"/>
</dbReference>
<dbReference type="InterPro" id="IPR015683">
    <property type="entry name" value="Ionotropic_Glu_rcpt"/>
</dbReference>
<dbReference type="InterPro" id="IPR001320">
    <property type="entry name" value="Iontro_rcpt_C"/>
</dbReference>
<dbReference type="InterPro" id="IPR017103">
    <property type="entry name" value="Iontropic_Glu_rcpt_pln"/>
</dbReference>
<dbReference type="InterPro" id="IPR028082">
    <property type="entry name" value="Peripla_BP_I"/>
</dbReference>
<dbReference type="PANTHER" id="PTHR34836">
    <property type="entry name" value="OS06G0188250 PROTEIN"/>
    <property type="match status" value="1"/>
</dbReference>
<dbReference type="PANTHER" id="PTHR34836:SF1">
    <property type="entry name" value="OS09G0428600 PROTEIN"/>
    <property type="match status" value="1"/>
</dbReference>
<dbReference type="Pfam" id="PF01094">
    <property type="entry name" value="ANF_receptor"/>
    <property type="match status" value="1"/>
</dbReference>
<dbReference type="Pfam" id="PF00060">
    <property type="entry name" value="Lig_chan"/>
    <property type="match status" value="1"/>
</dbReference>
<dbReference type="Pfam" id="PF10613">
    <property type="entry name" value="Lig_chan-Glu_bd"/>
    <property type="match status" value="1"/>
</dbReference>
<dbReference type="PIRSF" id="PIRSF037090">
    <property type="entry name" value="Iontro_Glu-like_rcpt_pln"/>
    <property type="match status" value="1"/>
</dbReference>
<dbReference type="SMART" id="SM00079">
    <property type="entry name" value="PBPe"/>
    <property type="match status" value="1"/>
</dbReference>
<dbReference type="SUPFAM" id="SSF53822">
    <property type="entry name" value="Periplasmic binding protein-like I"/>
    <property type="match status" value="1"/>
</dbReference>
<dbReference type="SUPFAM" id="SSF53850">
    <property type="entry name" value="Periplasmic binding protein-like II"/>
    <property type="match status" value="1"/>
</dbReference>
<keyword id="KW-0325">Glycoprotein</keyword>
<keyword id="KW-0407">Ion channel</keyword>
<keyword id="KW-0406">Ion transport</keyword>
<keyword id="KW-1071">Ligand-gated ion channel</keyword>
<keyword id="KW-0472">Membrane</keyword>
<keyword id="KW-0675">Receptor</keyword>
<keyword id="KW-1185">Reference proteome</keyword>
<keyword id="KW-0732">Signal</keyword>
<keyword id="KW-0812">Transmembrane</keyword>
<keyword id="KW-1133">Transmembrane helix</keyword>
<keyword id="KW-0813">Transport</keyword>
<proteinExistence type="evidence at transcript level"/>
<feature type="signal peptide" evidence="2">
    <location>
        <begin position="1"/>
        <end position="23"/>
    </location>
</feature>
<feature type="chain" id="PRO_0000011598" description="Glutamate receptor 2.3">
    <location>
        <begin position="24"/>
        <end position="895"/>
    </location>
</feature>
<feature type="topological domain" description="Extracellular" evidence="2">
    <location>
        <begin position="24"/>
        <end position="582"/>
    </location>
</feature>
<feature type="transmembrane region" description="Helical" evidence="2">
    <location>
        <begin position="583"/>
        <end position="603"/>
    </location>
</feature>
<feature type="topological domain" description="Cytoplasmic" evidence="2">
    <location>
        <begin position="604"/>
        <end position="610"/>
    </location>
</feature>
<feature type="transmembrane region" description="Helical" evidence="2">
    <location>
        <begin position="611"/>
        <end position="631"/>
    </location>
</feature>
<feature type="topological domain" description="Cytoplasmic" evidence="2">
    <location>
        <begin position="632"/>
        <end position="635"/>
    </location>
</feature>
<feature type="transmembrane region" description="Helical" evidence="2">
    <location>
        <begin position="636"/>
        <end position="656"/>
    </location>
</feature>
<feature type="topological domain" description="Extracellular" evidence="2">
    <location>
        <begin position="657"/>
        <end position="830"/>
    </location>
</feature>
<feature type="transmembrane region" description="Helical" evidence="2">
    <location>
        <begin position="831"/>
        <end position="851"/>
    </location>
</feature>
<feature type="topological domain" description="Cytoplasmic" evidence="2">
    <location>
        <begin position="852"/>
        <end position="895"/>
    </location>
</feature>
<feature type="region of interest" description="Disordered" evidence="3">
    <location>
        <begin position="873"/>
        <end position="895"/>
    </location>
</feature>
<feature type="glycosylation site" description="N-linked (GlcNAc...) asparagine" evidence="2">
    <location>
        <position position="52"/>
    </location>
</feature>
<feature type="glycosylation site" description="N-linked (GlcNAc...) asparagine" evidence="2">
    <location>
        <position position="203"/>
    </location>
</feature>
<feature type="glycosylation site" description="N-linked (GlcNAc...) asparagine" evidence="2">
    <location>
        <position position="266"/>
    </location>
</feature>
<feature type="glycosylation site" description="N-linked (GlcNAc...) asparagine" evidence="2">
    <location>
        <position position="330"/>
    </location>
</feature>
<feature type="glycosylation site" description="N-linked (GlcNAc...) asparagine" evidence="2">
    <location>
        <position position="342"/>
    </location>
</feature>
<feature type="glycosylation site" description="N-linked (GlcNAc...) asparagine" evidence="2">
    <location>
        <position position="477"/>
    </location>
</feature>
<feature type="glycosylation site" description="N-linked (GlcNAc...) asparagine" evidence="2">
    <location>
        <position position="542"/>
    </location>
</feature>
<protein>
    <recommendedName>
        <fullName>Glutamate receptor 2.3</fullName>
    </recommendedName>
    <alternativeName>
        <fullName>Ligand-gated ion channel 2.3</fullName>
    </alternativeName>
</protein>
<name>GLR23_ARATH</name>